<keyword id="KW-0131">Cell cycle</keyword>
<keyword id="KW-0132">Cell division</keyword>
<keyword id="KW-0574">Periplasm</keyword>
<keyword id="KW-0732">Signal</keyword>
<dbReference type="EMBL" id="CR628336">
    <property type="protein sequence ID" value="CAH12680.1"/>
    <property type="molecule type" value="Genomic_DNA"/>
</dbReference>
<dbReference type="RefSeq" id="WP_011213851.1">
    <property type="nucleotide sequence ID" value="NC_006368.1"/>
</dbReference>
<dbReference type="SMR" id="Q5X4Z1"/>
<dbReference type="KEGG" id="lpp:lpp1529"/>
<dbReference type="LegioList" id="lpp1529"/>
<dbReference type="HOGENOM" id="CLU_047123_0_0_6"/>
<dbReference type="GO" id="GO:0042597">
    <property type="term" value="C:periplasmic space"/>
    <property type="evidence" value="ECO:0007669"/>
    <property type="project" value="UniProtKB-SubCell"/>
</dbReference>
<dbReference type="GO" id="GO:0051301">
    <property type="term" value="P:cell division"/>
    <property type="evidence" value="ECO:0007669"/>
    <property type="project" value="UniProtKB-UniRule"/>
</dbReference>
<dbReference type="GO" id="GO:0017038">
    <property type="term" value="P:protein import"/>
    <property type="evidence" value="ECO:0007669"/>
    <property type="project" value="InterPro"/>
</dbReference>
<dbReference type="Gene3D" id="2.120.10.30">
    <property type="entry name" value="TolB, C-terminal domain"/>
    <property type="match status" value="1"/>
</dbReference>
<dbReference type="Gene3D" id="3.40.50.10070">
    <property type="entry name" value="TolB, N-terminal domain"/>
    <property type="match status" value="1"/>
</dbReference>
<dbReference type="HAMAP" id="MF_00671">
    <property type="entry name" value="TolB"/>
    <property type="match status" value="1"/>
</dbReference>
<dbReference type="InterPro" id="IPR011042">
    <property type="entry name" value="6-blade_b-propeller_TolB-like"/>
</dbReference>
<dbReference type="InterPro" id="IPR011659">
    <property type="entry name" value="PD40"/>
</dbReference>
<dbReference type="InterPro" id="IPR014167">
    <property type="entry name" value="Tol-Pal_TolB"/>
</dbReference>
<dbReference type="InterPro" id="IPR007195">
    <property type="entry name" value="TolB_N"/>
</dbReference>
<dbReference type="NCBIfam" id="TIGR02800">
    <property type="entry name" value="propeller_TolB"/>
    <property type="match status" value="1"/>
</dbReference>
<dbReference type="PANTHER" id="PTHR36842:SF1">
    <property type="entry name" value="PROTEIN TOLB"/>
    <property type="match status" value="1"/>
</dbReference>
<dbReference type="PANTHER" id="PTHR36842">
    <property type="entry name" value="PROTEIN TOLB HOMOLOG"/>
    <property type="match status" value="1"/>
</dbReference>
<dbReference type="Pfam" id="PF07676">
    <property type="entry name" value="PD40"/>
    <property type="match status" value="3"/>
</dbReference>
<dbReference type="Pfam" id="PF04052">
    <property type="entry name" value="TolB_N"/>
    <property type="match status" value="1"/>
</dbReference>
<dbReference type="SUPFAM" id="SSF52964">
    <property type="entry name" value="TolB, N-terminal domain"/>
    <property type="match status" value="1"/>
</dbReference>
<dbReference type="SUPFAM" id="SSF69304">
    <property type="entry name" value="Tricorn protease N-terminal domain"/>
    <property type="match status" value="1"/>
</dbReference>
<gene>
    <name evidence="1" type="primary">tolB</name>
    <name type="ordered locus">lpp1529</name>
</gene>
<sequence length="419" mass="45372">MCNRIISLFLLLFTGQVIALDLELTQGINSALPIAINSFGSDAAAQEIGNVIENDLTISGQFKIISGPQGANSQSSVSTLRQLGADSVVTGRVNQVGNRIEVSFTLADAVANGNILLTKTFQINANQVRALAHHISDEVYQKLTGERGIFSTRIAYISVQRNGGRSRYSLEVADADGHNPQSLLVSSEPIMSPSWSPNGKSISYVSFEKKKAEIFTVSVETGQRRLITSFPGINGAPAWSPDGRHLAVVLSKSGTPKIYDVDLSSGSMKQLTFGNSIDTEPRYSPDGRSLLFTSGRGGSPQVYRLSLADGQISRVTFEGNYNARASYTPDMKHIVMLHREDRQFNIGVQNTGGGPISNLTFSGLDESPSVSPNSRLVLYATRYQDRGVLGIVSIDGRIRMRLPAREGDVQEPAWSPYLS</sequence>
<protein>
    <recommendedName>
        <fullName evidence="1">Tol-Pal system protein TolB</fullName>
    </recommendedName>
</protein>
<comment type="function">
    <text evidence="1">Part of the Tol-Pal system, which plays a role in outer membrane invagination during cell division and is important for maintaining outer membrane integrity.</text>
</comment>
<comment type="subunit">
    <text evidence="1">The Tol-Pal system is composed of five core proteins: the inner membrane proteins TolA, TolQ and TolR, the periplasmic protein TolB and the outer membrane protein Pal. They form a network linking the inner and outer membranes and the peptidoglycan layer.</text>
</comment>
<comment type="subcellular location">
    <subcellularLocation>
        <location evidence="1">Periplasm</location>
    </subcellularLocation>
</comment>
<comment type="similarity">
    <text evidence="1">Belongs to the TolB family.</text>
</comment>
<proteinExistence type="inferred from homology"/>
<organism>
    <name type="scientific">Legionella pneumophila (strain Paris)</name>
    <dbReference type="NCBI Taxonomy" id="297246"/>
    <lineage>
        <taxon>Bacteria</taxon>
        <taxon>Pseudomonadati</taxon>
        <taxon>Pseudomonadota</taxon>
        <taxon>Gammaproteobacteria</taxon>
        <taxon>Legionellales</taxon>
        <taxon>Legionellaceae</taxon>
        <taxon>Legionella</taxon>
    </lineage>
</organism>
<reference key="1">
    <citation type="journal article" date="2004" name="Nat. Genet.">
        <title>Evidence in the Legionella pneumophila genome for exploitation of host cell functions and high genome plasticity.</title>
        <authorList>
            <person name="Cazalet C."/>
            <person name="Rusniok C."/>
            <person name="Brueggemann H."/>
            <person name="Zidane N."/>
            <person name="Magnier A."/>
            <person name="Ma L."/>
            <person name="Tichit M."/>
            <person name="Jarraud S."/>
            <person name="Bouchier C."/>
            <person name="Vandenesch F."/>
            <person name="Kunst F."/>
            <person name="Etienne J."/>
            <person name="Glaser P."/>
            <person name="Buchrieser C."/>
        </authorList>
    </citation>
    <scope>NUCLEOTIDE SEQUENCE [LARGE SCALE GENOMIC DNA]</scope>
    <source>
        <strain>Paris</strain>
    </source>
</reference>
<evidence type="ECO:0000255" key="1">
    <source>
        <dbReference type="HAMAP-Rule" id="MF_00671"/>
    </source>
</evidence>
<feature type="signal peptide" evidence="1">
    <location>
        <begin position="1"/>
        <end position="19"/>
    </location>
</feature>
<feature type="chain" id="PRO_0000034661" description="Tol-Pal system protein TolB" evidence="1">
    <location>
        <begin position="20"/>
        <end position="419"/>
    </location>
</feature>
<name>TOLB_LEGPA</name>
<accession>Q5X4Z1</accession>